<proteinExistence type="inferred from homology"/>
<accession>P48275</accession>
<geneLocation type="cyanelle"/>
<protein>
    <recommendedName>
        <fullName>Uncharacterized protein ycf35</fullName>
    </recommendedName>
</protein>
<gene>
    <name type="primary">ycf35</name>
</gene>
<organism>
    <name type="scientific">Cyanophora paradoxa</name>
    <dbReference type="NCBI Taxonomy" id="2762"/>
    <lineage>
        <taxon>Eukaryota</taxon>
        <taxon>Glaucocystophyceae</taxon>
        <taxon>Cyanophoraceae</taxon>
        <taxon>Cyanophora</taxon>
    </lineage>
</organism>
<evidence type="ECO:0000305" key="1"/>
<comment type="subcellular location">
    <subcellularLocation>
        <location>Plastid</location>
        <location>Cyanelle</location>
    </subcellularLocation>
</comment>
<comment type="similarity">
    <text evidence="1">Belongs to the ycf35 family.</text>
</comment>
<feature type="chain" id="PRO_0000217347" description="Uncharacterized protein ycf35">
    <location>
        <begin position="1"/>
        <end position="128"/>
    </location>
</feature>
<name>YCF35_CYAPA</name>
<sequence>MSHLTQVQTNIVNEEALKKALNALNIKWQDGPQNIKNLYGQEQTVDILIKQKNNFDIGFVKEELEYKLIADLQYWEQPYTVETFLQQLKQQYAYQIILDETINKGFEKLEEEYDKDGSIRLVVQRWRY</sequence>
<dbReference type="EMBL" id="U30821">
    <property type="protein sequence ID" value="AAA81309.1"/>
    <property type="molecule type" value="Genomic_DNA"/>
</dbReference>
<dbReference type="PIR" id="T06966">
    <property type="entry name" value="T06966"/>
</dbReference>
<dbReference type="RefSeq" id="NP_043278.1">
    <property type="nucleotide sequence ID" value="NC_001675.1"/>
</dbReference>
<dbReference type="GeneID" id="801634"/>
<dbReference type="GO" id="GO:0009842">
    <property type="term" value="C:cyanelle"/>
    <property type="evidence" value="ECO:0007669"/>
    <property type="project" value="UniProtKB-SubCell"/>
</dbReference>
<dbReference type="InterPro" id="IPR009666">
    <property type="entry name" value="Uncharacterised_Ycf35"/>
</dbReference>
<dbReference type="PANTHER" id="PTHR39638">
    <property type="entry name" value="YCF35"/>
    <property type="match status" value="1"/>
</dbReference>
<dbReference type="PANTHER" id="PTHR39638:SF2">
    <property type="entry name" value="YCF35"/>
    <property type="match status" value="1"/>
</dbReference>
<dbReference type="Pfam" id="PF06868">
    <property type="entry name" value="DUF1257"/>
    <property type="match status" value="1"/>
</dbReference>
<reference key="1">
    <citation type="journal article" date="1995" name="Plant Mol. Biol. Rep.">
        <title>Nucleotide sequence of the cyanelle DNA from Cyanophora paradoxa.</title>
        <authorList>
            <person name="Stirewalt V.L."/>
            <person name="Michalowski C.B."/>
            <person name="Loeffelhardt W."/>
            <person name="Bohnert H.J."/>
            <person name="Bryant D.A."/>
        </authorList>
    </citation>
    <scope>NUCLEOTIDE SEQUENCE [LARGE SCALE GENOMIC DNA]</scope>
    <source>
        <strain>UTEX LB 555 / Pringsheim</strain>
    </source>
</reference>
<reference key="2">
    <citation type="book" date="1997" name="Eukaryotism and symbiosis">
        <title>The complete sequence of the cyanelle genome of Cyanophora paradoxa: the genetic complexity of a primitive plastid.</title>
        <editorList>
            <person name="Schenk H.E.A."/>
            <person name="Herrmann R."/>
            <person name="Jeon K.W."/>
            <person name="Mueller N.E."/>
            <person name="Schwemmler W."/>
        </editorList>
        <authorList>
            <person name="Loeffelhardt W."/>
            <person name="Stirewalt V.L."/>
            <person name="Michalowski C.B."/>
            <person name="Annarella M."/>
            <person name="Farley J.Y."/>
            <person name="Schluchter W.M."/>
            <person name="Chung S."/>
            <person name="Newmann-Spallart C."/>
            <person name="Steiner J.M."/>
            <person name="Jakowitsch J."/>
            <person name="Bohnert H.J."/>
            <person name="Bryant D.A."/>
        </authorList>
    </citation>
    <scope>NUCLEOTIDE SEQUENCE [LARGE SCALE GENOMIC DNA]</scope>
    <source>
        <strain>UTEX LB 555 / Pringsheim</strain>
    </source>
</reference>
<keyword id="KW-0194">Cyanelle</keyword>
<keyword id="KW-0934">Plastid</keyword>